<reference key="1">
    <citation type="journal article" date="2003" name="Lancet">
        <title>Genome sequence of Vibrio parahaemolyticus: a pathogenic mechanism distinct from that of V. cholerae.</title>
        <authorList>
            <person name="Makino K."/>
            <person name="Oshima K."/>
            <person name="Kurokawa K."/>
            <person name="Yokoyama K."/>
            <person name="Uda T."/>
            <person name="Tagomori K."/>
            <person name="Iijima Y."/>
            <person name="Najima M."/>
            <person name="Nakano M."/>
            <person name="Yamashita A."/>
            <person name="Kubota Y."/>
            <person name="Kimura S."/>
            <person name="Yasunaga T."/>
            <person name="Honda T."/>
            <person name="Shinagawa H."/>
            <person name="Hattori M."/>
            <person name="Iida T."/>
        </authorList>
    </citation>
    <scope>NUCLEOTIDE SEQUENCE [LARGE SCALE GENOMIC DNA]</scope>
    <source>
        <strain>RIMD 2210633</strain>
    </source>
</reference>
<name>METJ_VIBPA</name>
<comment type="function">
    <text evidence="1">This regulatory protein, when combined with SAM (S-adenosylmethionine) represses the expression of the methionine regulon and of enzymes involved in SAM synthesis.</text>
</comment>
<comment type="subunit">
    <text evidence="1">Homodimer.</text>
</comment>
<comment type="subcellular location">
    <subcellularLocation>
        <location evidence="1">Cytoplasm</location>
    </subcellularLocation>
</comment>
<comment type="domain">
    <text>Does not bind DNA by a helix-turn-helix motif.</text>
</comment>
<comment type="similarity">
    <text evidence="1">Belongs to the MetJ family.</text>
</comment>
<protein>
    <recommendedName>
        <fullName evidence="1">Met repressor</fullName>
    </recommendedName>
    <alternativeName>
        <fullName evidence="1">Met regulon regulatory protein MetJ</fullName>
    </alternativeName>
</protein>
<evidence type="ECO:0000255" key="1">
    <source>
        <dbReference type="HAMAP-Rule" id="MF_00744"/>
    </source>
</evidence>
<proteinExistence type="inferred from homology"/>
<gene>
    <name evidence="1" type="primary">metJ</name>
    <name type="ordered locus">VP2766</name>
</gene>
<dbReference type="EMBL" id="BA000031">
    <property type="protein sequence ID" value="BAC61029.1"/>
    <property type="molecule type" value="Genomic_DNA"/>
</dbReference>
<dbReference type="RefSeq" id="NP_799145.1">
    <property type="nucleotide sequence ID" value="NC_004603.1"/>
</dbReference>
<dbReference type="RefSeq" id="WP_005432736.1">
    <property type="nucleotide sequence ID" value="NC_004603.1"/>
</dbReference>
<dbReference type="SMR" id="Q87L49"/>
<dbReference type="GeneID" id="83583687"/>
<dbReference type="KEGG" id="vpa:VP2766"/>
<dbReference type="PATRIC" id="fig|223926.6.peg.2662"/>
<dbReference type="eggNOG" id="COG3060">
    <property type="taxonomic scope" value="Bacteria"/>
</dbReference>
<dbReference type="HOGENOM" id="CLU_142318_0_0_6"/>
<dbReference type="PRO" id="PR:Q87L49"/>
<dbReference type="Proteomes" id="UP000002493">
    <property type="component" value="Chromosome 1"/>
</dbReference>
<dbReference type="GO" id="GO:0005737">
    <property type="term" value="C:cytoplasm"/>
    <property type="evidence" value="ECO:0007669"/>
    <property type="project" value="UniProtKB-SubCell"/>
</dbReference>
<dbReference type="GO" id="GO:0003677">
    <property type="term" value="F:DNA binding"/>
    <property type="evidence" value="ECO:0007669"/>
    <property type="project" value="UniProtKB-KW"/>
</dbReference>
<dbReference type="GO" id="GO:0003700">
    <property type="term" value="F:DNA-binding transcription factor activity"/>
    <property type="evidence" value="ECO:0007669"/>
    <property type="project" value="InterPro"/>
</dbReference>
<dbReference type="GO" id="GO:0009086">
    <property type="term" value="P:methionine biosynthetic process"/>
    <property type="evidence" value="ECO:0007669"/>
    <property type="project" value="UniProtKB-UniRule"/>
</dbReference>
<dbReference type="GO" id="GO:0045892">
    <property type="term" value="P:negative regulation of DNA-templated transcription"/>
    <property type="evidence" value="ECO:0007669"/>
    <property type="project" value="UniProtKB-UniRule"/>
</dbReference>
<dbReference type="CDD" id="cd00490">
    <property type="entry name" value="Met_repressor_MetJ"/>
    <property type="match status" value="1"/>
</dbReference>
<dbReference type="FunFam" id="1.10.140.10:FF:000001">
    <property type="entry name" value="Met repressor"/>
    <property type="match status" value="1"/>
</dbReference>
<dbReference type="Gene3D" id="1.10.140.10">
    <property type="entry name" value="MET Apo-Repressor, subunit A"/>
    <property type="match status" value="1"/>
</dbReference>
<dbReference type="HAMAP" id="MF_00744">
    <property type="entry name" value="MetJ"/>
    <property type="match status" value="1"/>
</dbReference>
<dbReference type="InterPro" id="IPR002084">
    <property type="entry name" value="Met_repressor_MetJ"/>
</dbReference>
<dbReference type="InterPro" id="IPR023453">
    <property type="entry name" value="Met_repressor_MetJ_dom_sf"/>
</dbReference>
<dbReference type="InterPro" id="IPR010985">
    <property type="entry name" value="Ribbon_hlx_hlx"/>
</dbReference>
<dbReference type="NCBIfam" id="NF003622">
    <property type="entry name" value="PRK05264.1"/>
    <property type="match status" value="1"/>
</dbReference>
<dbReference type="Pfam" id="PF01340">
    <property type="entry name" value="MetJ"/>
    <property type="match status" value="1"/>
</dbReference>
<dbReference type="SUPFAM" id="SSF47598">
    <property type="entry name" value="Ribbon-helix-helix"/>
    <property type="match status" value="1"/>
</dbReference>
<organism>
    <name type="scientific">Vibrio parahaemolyticus serotype O3:K6 (strain RIMD 2210633)</name>
    <dbReference type="NCBI Taxonomy" id="223926"/>
    <lineage>
        <taxon>Bacteria</taxon>
        <taxon>Pseudomonadati</taxon>
        <taxon>Pseudomonadota</taxon>
        <taxon>Gammaproteobacteria</taxon>
        <taxon>Vibrionales</taxon>
        <taxon>Vibrionaceae</taxon>
        <taxon>Vibrio</taxon>
    </lineage>
</organism>
<accession>Q87L49</accession>
<feature type="chain" id="PRO_0000198409" description="Met repressor">
    <location>
        <begin position="1"/>
        <end position="106"/>
    </location>
</feature>
<keyword id="KW-0028">Amino-acid biosynthesis</keyword>
<keyword id="KW-0963">Cytoplasm</keyword>
<keyword id="KW-0238">DNA-binding</keyword>
<keyword id="KW-0486">Methionine biosynthesis</keyword>
<keyword id="KW-0678">Repressor</keyword>
<keyword id="KW-0804">Transcription</keyword>
<keyword id="KW-0805">Transcription regulation</keyword>
<sequence length="106" mass="12132">MADWNGEYISPYAEHGKKSEQVKKITVSIPLKVLKVLTDERTRRQINNLRHATNSELLCEAFLHAYTGQPLPTDEDLRKDRPDDIPTEAKALMTAMGIEFEAFDEE</sequence>